<proteinExistence type="predicted"/>
<sequence>MIVTLLNALSAMAAFTAAGLWWRSTVIAVPFDHEIPEDGWRPAAILASGPKGDIDVFKTQNAANALNNRAAKAAALAAACQGTAIALPILQDMFHALV</sequence>
<name>Y4CB_SINFN</name>
<protein>
    <recommendedName>
        <fullName>Uncharacterized protein y4cB</fullName>
    </recommendedName>
</protein>
<accession>P55384</accession>
<dbReference type="EMBL" id="U00090">
    <property type="protein sequence ID" value="AAB91632.1"/>
    <property type="molecule type" value="Genomic_DNA"/>
</dbReference>
<dbReference type="PIR" id="T28629">
    <property type="entry name" value="T28629"/>
</dbReference>
<dbReference type="RefSeq" id="NP_443794.1">
    <property type="nucleotide sequence ID" value="NC_000914.2"/>
</dbReference>
<dbReference type="RefSeq" id="WP_010875055.1">
    <property type="nucleotide sequence ID" value="NC_000914.2"/>
</dbReference>
<dbReference type="SMR" id="P55384"/>
<dbReference type="KEGG" id="rhi:NGR_a00120"/>
<dbReference type="HOGENOM" id="CLU_2331750_0_0_5"/>
<dbReference type="OrthoDB" id="9989341at2"/>
<dbReference type="Proteomes" id="UP000001054">
    <property type="component" value="Plasmid pNGR234a"/>
</dbReference>
<dbReference type="GO" id="GO:0005886">
    <property type="term" value="C:plasma membrane"/>
    <property type="evidence" value="ECO:0007669"/>
    <property type="project" value="UniProtKB-SubCell"/>
</dbReference>
<organism>
    <name type="scientific">Sinorhizobium fredii (strain NBRC 101917 / NGR234)</name>
    <dbReference type="NCBI Taxonomy" id="394"/>
    <lineage>
        <taxon>Bacteria</taxon>
        <taxon>Pseudomonadati</taxon>
        <taxon>Pseudomonadota</taxon>
        <taxon>Alphaproteobacteria</taxon>
        <taxon>Hyphomicrobiales</taxon>
        <taxon>Rhizobiaceae</taxon>
        <taxon>Sinorhizobium/Ensifer group</taxon>
        <taxon>Sinorhizobium</taxon>
    </lineage>
</organism>
<evidence type="ECO:0000255" key="1"/>
<evidence type="ECO:0000305" key="2"/>
<gene>
    <name type="ordered locus">NGR_a00120</name>
    <name type="ORF">y4cB</name>
</gene>
<geneLocation type="plasmid">
    <name>sym pNGR234a</name>
</geneLocation>
<comment type="subcellular location">
    <subcellularLocation>
        <location evidence="2">Cell membrane</location>
        <topology evidence="2">Multi-pass membrane protein</topology>
    </subcellularLocation>
</comment>
<keyword id="KW-1003">Cell membrane</keyword>
<keyword id="KW-0472">Membrane</keyword>
<keyword id="KW-0614">Plasmid</keyword>
<keyword id="KW-1185">Reference proteome</keyword>
<keyword id="KW-0812">Transmembrane</keyword>
<keyword id="KW-1133">Transmembrane helix</keyword>
<feature type="chain" id="PRO_0000200812" description="Uncharacterized protein y4cB">
    <location>
        <begin position="1"/>
        <end position="98"/>
    </location>
</feature>
<feature type="transmembrane region" description="Helical" evidence="1">
    <location>
        <begin position="2"/>
        <end position="22"/>
    </location>
</feature>
<feature type="transmembrane region" description="Helical" evidence="1">
    <location>
        <begin position="70"/>
        <end position="90"/>
    </location>
</feature>
<reference key="1">
    <citation type="journal article" date="1997" name="Nature">
        <title>Molecular basis of symbiosis between Rhizobium and legumes.</title>
        <authorList>
            <person name="Freiberg C.A."/>
            <person name="Fellay R."/>
            <person name="Bairoch A."/>
            <person name="Broughton W.J."/>
            <person name="Rosenthal A."/>
            <person name="Perret X."/>
        </authorList>
    </citation>
    <scope>NUCLEOTIDE SEQUENCE [LARGE SCALE GENOMIC DNA]</scope>
    <source>
        <strain>NBRC 101917 / NGR234</strain>
    </source>
</reference>
<reference key="2">
    <citation type="journal article" date="2009" name="Appl. Environ. Microbiol.">
        <title>Rhizobium sp. strain NGR234 possesses a remarkable number of secretion systems.</title>
        <authorList>
            <person name="Schmeisser C."/>
            <person name="Liesegang H."/>
            <person name="Krysciak D."/>
            <person name="Bakkou N."/>
            <person name="Le Quere A."/>
            <person name="Wollherr A."/>
            <person name="Heinemeyer I."/>
            <person name="Morgenstern B."/>
            <person name="Pommerening-Roeser A."/>
            <person name="Flores M."/>
            <person name="Palacios R."/>
            <person name="Brenner S."/>
            <person name="Gottschalk G."/>
            <person name="Schmitz R.A."/>
            <person name="Broughton W.J."/>
            <person name="Perret X."/>
            <person name="Strittmatter A.W."/>
            <person name="Streit W.R."/>
        </authorList>
    </citation>
    <scope>NUCLEOTIDE SEQUENCE [LARGE SCALE GENOMIC DNA]</scope>
    <source>
        <strain>NBRC 101917 / NGR234</strain>
    </source>
</reference>